<protein>
    <recommendedName>
        <fullName evidence="1">Bifunctional enzyme IspD/IspF</fullName>
    </recommendedName>
    <domain>
        <recommendedName>
            <fullName evidence="1">2-C-methyl-D-erythritol 4-phosphate cytidylyltransferase</fullName>
            <ecNumber evidence="1">2.7.7.60</ecNumber>
        </recommendedName>
        <alternativeName>
            <fullName evidence="1">4-diphosphocytidyl-2C-methyl-D-erythritol synthase</fullName>
        </alternativeName>
        <alternativeName>
            <fullName evidence="1">MEP cytidylyltransferase</fullName>
            <shortName evidence="1">MCT</shortName>
        </alternativeName>
    </domain>
    <domain>
        <recommendedName>
            <fullName evidence="1">2-C-methyl-D-erythritol 2,4-cyclodiphosphate synthase</fullName>
            <shortName evidence="1">MECDP-synthase</shortName>
            <shortName evidence="1">MECPP-synthase</shortName>
            <shortName evidence="1">MECPS</shortName>
            <ecNumber evidence="1">4.6.1.12</ecNumber>
        </recommendedName>
    </domain>
</protein>
<reference key="1">
    <citation type="journal article" date="2005" name="PLoS Biol.">
        <title>The Wolbachia genome of Brugia malayi: endosymbiont evolution within a human pathogenic nematode.</title>
        <authorList>
            <person name="Foster J."/>
            <person name="Ganatra M."/>
            <person name="Kamal I."/>
            <person name="Ware J."/>
            <person name="Makarova K."/>
            <person name="Ivanova N."/>
            <person name="Bhattacharyya A."/>
            <person name="Kapatral V."/>
            <person name="Kumar S."/>
            <person name="Posfai J."/>
            <person name="Vincze T."/>
            <person name="Ingram J."/>
            <person name="Moran L."/>
            <person name="Lapidus A."/>
            <person name="Omelchenko M."/>
            <person name="Kyrpides N."/>
            <person name="Ghedin E."/>
            <person name="Wang S."/>
            <person name="Goltsman E."/>
            <person name="Joukov V."/>
            <person name="Ostrovskaya O."/>
            <person name="Tsukerman K."/>
            <person name="Mazur M."/>
            <person name="Comb D."/>
            <person name="Koonin E."/>
            <person name="Slatko B."/>
        </authorList>
    </citation>
    <scope>NUCLEOTIDE SEQUENCE [LARGE SCALE GENOMIC DNA]</scope>
    <source>
        <strain>TRS</strain>
    </source>
</reference>
<comment type="function">
    <text evidence="1">Bifunctional enzyme that catalyzes the formation of 4-diphosphocytidyl-2-C-methyl-D-erythritol from CTP and 2-C-methyl-D-erythritol 4-phosphate (MEP) (IspD), and catalyzes the conversion of 4-diphosphocytidyl-2-C-methyl-D-erythritol 2-phosphate (CDP-ME2P) to 2-C-methyl-D-erythritol 2,4-cyclodiphosphate (ME-CPP) with a corresponding release of cytidine 5-monophosphate (CMP) (IspF).</text>
</comment>
<comment type="catalytic activity">
    <reaction evidence="1">
        <text>2-C-methyl-D-erythritol 4-phosphate + CTP + H(+) = 4-CDP-2-C-methyl-D-erythritol + diphosphate</text>
        <dbReference type="Rhea" id="RHEA:13429"/>
        <dbReference type="ChEBI" id="CHEBI:15378"/>
        <dbReference type="ChEBI" id="CHEBI:33019"/>
        <dbReference type="ChEBI" id="CHEBI:37563"/>
        <dbReference type="ChEBI" id="CHEBI:57823"/>
        <dbReference type="ChEBI" id="CHEBI:58262"/>
        <dbReference type="EC" id="2.7.7.60"/>
    </reaction>
</comment>
<comment type="catalytic activity">
    <reaction evidence="1">
        <text>4-CDP-2-C-methyl-D-erythritol 2-phosphate = 2-C-methyl-D-erythritol 2,4-cyclic diphosphate + CMP</text>
        <dbReference type="Rhea" id="RHEA:23864"/>
        <dbReference type="ChEBI" id="CHEBI:57919"/>
        <dbReference type="ChEBI" id="CHEBI:58483"/>
        <dbReference type="ChEBI" id="CHEBI:60377"/>
        <dbReference type="EC" id="4.6.1.12"/>
    </reaction>
</comment>
<comment type="cofactor">
    <cofactor evidence="1">
        <name>a divalent metal cation</name>
        <dbReference type="ChEBI" id="CHEBI:60240"/>
    </cofactor>
</comment>
<comment type="pathway">
    <text evidence="1">Isoprenoid biosynthesis; isopentenyl diphosphate biosynthesis via DXP pathway; isopentenyl diphosphate from 1-deoxy-D-xylulose 5-phosphate: step 2/6.</text>
</comment>
<comment type="pathway">
    <text evidence="1">Isoprenoid biosynthesis; isopentenyl diphosphate biosynthesis via DXP pathway; isopentenyl diphosphate from 1-deoxy-D-xylulose 5-phosphate: step 4/6.</text>
</comment>
<comment type="similarity">
    <text evidence="1">In the N-terminal section; belongs to the IspD/TarI cytidylyltransferase family. IspD subfamily.</text>
</comment>
<comment type="similarity">
    <text evidence="1">In the C-terminal section; belongs to the IspF family.</text>
</comment>
<gene>
    <name evidence="1" type="primary">ispDF</name>
    <name type="ordered locus">Wbm0409</name>
</gene>
<organism>
    <name type="scientific">Wolbachia sp. subsp. Brugia malayi (strain TRS)</name>
    <dbReference type="NCBI Taxonomy" id="292805"/>
    <lineage>
        <taxon>Bacteria</taxon>
        <taxon>Pseudomonadati</taxon>
        <taxon>Pseudomonadota</taxon>
        <taxon>Alphaproteobacteria</taxon>
        <taxon>Rickettsiales</taxon>
        <taxon>Anaplasmataceae</taxon>
        <taxon>Wolbachieae</taxon>
        <taxon>Wolbachia</taxon>
    </lineage>
</organism>
<dbReference type="EC" id="2.7.7.60" evidence="1"/>
<dbReference type="EC" id="4.6.1.12" evidence="1"/>
<dbReference type="EMBL" id="AE017321">
    <property type="protein sequence ID" value="AAW70997.1"/>
    <property type="molecule type" value="Genomic_DNA"/>
</dbReference>
<dbReference type="SMR" id="Q5GSM7"/>
<dbReference type="STRING" id="292805.Wbm0409"/>
<dbReference type="KEGG" id="wbm:Wbm0409"/>
<dbReference type="eggNOG" id="COG0245">
    <property type="taxonomic scope" value="Bacteria"/>
</dbReference>
<dbReference type="eggNOG" id="COG1211">
    <property type="taxonomic scope" value="Bacteria"/>
</dbReference>
<dbReference type="HOGENOM" id="CLU_042800_2_3_5"/>
<dbReference type="UniPathway" id="UPA00056">
    <property type="reaction ID" value="UER00093"/>
</dbReference>
<dbReference type="UniPathway" id="UPA00056">
    <property type="reaction ID" value="UER00095"/>
</dbReference>
<dbReference type="Proteomes" id="UP000000534">
    <property type="component" value="Chromosome"/>
</dbReference>
<dbReference type="GO" id="GO:0008685">
    <property type="term" value="F:2-C-methyl-D-erythritol 2,4-cyclodiphosphate synthase activity"/>
    <property type="evidence" value="ECO:0007669"/>
    <property type="project" value="UniProtKB-UniRule"/>
</dbReference>
<dbReference type="GO" id="GO:0050518">
    <property type="term" value="F:2-C-methyl-D-erythritol 4-phosphate cytidylyltransferase activity"/>
    <property type="evidence" value="ECO:0007669"/>
    <property type="project" value="UniProtKB-UniRule"/>
</dbReference>
<dbReference type="GO" id="GO:0046872">
    <property type="term" value="F:metal ion binding"/>
    <property type="evidence" value="ECO:0007669"/>
    <property type="project" value="UniProtKB-KW"/>
</dbReference>
<dbReference type="GO" id="GO:0019288">
    <property type="term" value="P:isopentenyl diphosphate biosynthetic process, methylerythritol 4-phosphate pathway"/>
    <property type="evidence" value="ECO:0007669"/>
    <property type="project" value="UniProtKB-UniRule"/>
</dbReference>
<dbReference type="GO" id="GO:0016114">
    <property type="term" value="P:terpenoid biosynthetic process"/>
    <property type="evidence" value="ECO:0007669"/>
    <property type="project" value="InterPro"/>
</dbReference>
<dbReference type="CDD" id="cd02516">
    <property type="entry name" value="CDP-ME_synthetase"/>
    <property type="match status" value="1"/>
</dbReference>
<dbReference type="CDD" id="cd00554">
    <property type="entry name" value="MECDP_synthase"/>
    <property type="match status" value="1"/>
</dbReference>
<dbReference type="Gene3D" id="3.30.1330.50">
    <property type="entry name" value="2-C-methyl-D-erythritol 2,4-cyclodiphosphate synthase"/>
    <property type="match status" value="1"/>
</dbReference>
<dbReference type="Gene3D" id="3.90.550.10">
    <property type="entry name" value="Spore Coat Polysaccharide Biosynthesis Protein SpsA, Chain A"/>
    <property type="match status" value="1"/>
</dbReference>
<dbReference type="HAMAP" id="MF_01520">
    <property type="entry name" value="IspDF"/>
    <property type="match status" value="1"/>
</dbReference>
<dbReference type="HAMAP" id="MF_00107">
    <property type="entry name" value="IspF"/>
    <property type="match status" value="1"/>
</dbReference>
<dbReference type="InterPro" id="IPR026596">
    <property type="entry name" value="IspD/F"/>
</dbReference>
<dbReference type="InterPro" id="IPR034683">
    <property type="entry name" value="IspD/TarI"/>
</dbReference>
<dbReference type="InterPro" id="IPR003526">
    <property type="entry name" value="MECDP_synthase"/>
</dbReference>
<dbReference type="InterPro" id="IPR020555">
    <property type="entry name" value="MECDP_synthase_CS"/>
</dbReference>
<dbReference type="InterPro" id="IPR036571">
    <property type="entry name" value="MECDP_synthase_sf"/>
</dbReference>
<dbReference type="InterPro" id="IPR029044">
    <property type="entry name" value="Nucleotide-diphossugar_trans"/>
</dbReference>
<dbReference type="NCBIfam" id="TIGR00151">
    <property type="entry name" value="ispF"/>
    <property type="match status" value="1"/>
</dbReference>
<dbReference type="PANTHER" id="PTHR43181">
    <property type="entry name" value="2-C-METHYL-D-ERYTHRITOL 2,4-CYCLODIPHOSPHATE SYNTHASE, CHLOROPLASTIC"/>
    <property type="match status" value="1"/>
</dbReference>
<dbReference type="PANTHER" id="PTHR43181:SF1">
    <property type="entry name" value="2-C-METHYL-D-ERYTHRITOL 2,4-CYCLODIPHOSPHATE SYNTHASE, CHLOROPLASTIC"/>
    <property type="match status" value="1"/>
</dbReference>
<dbReference type="Pfam" id="PF01128">
    <property type="entry name" value="IspD"/>
    <property type="match status" value="1"/>
</dbReference>
<dbReference type="Pfam" id="PF02542">
    <property type="entry name" value="YgbB"/>
    <property type="match status" value="1"/>
</dbReference>
<dbReference type="SUPFAM" id="SSF69765">
    <property type="entry name" value="IpsF-like"/>
    <property type="match status" value="1"/>
</dbReference>
<dbReference type="SUPFAM" id="SSF53448">
    <property type="entry name" value="Nucleotide-diphospho-sugar transferases"/>
    <property type="match status" value="1"/>
</dbReference>
<dbReference type="PROSITE" id="PS01350">
    <property type="entry name" value="ISPF"/>
    <property type="match status" value="1"/>
</dbReference>
<sequence>MTLADKPVLSHAVKKLLTNQYIDYVRVIINRNHEDFYRETIDSLHNYYLSEAVHSFQYVTLKSRKKEEWIPVSSTGMKGRVDTKLLSPVYGGKSRQNSVKLGLESLQKINPDFVVIHDACRPFVSNTLINNLARSMINNQHTGVVPAIEVEDTISLVNDDLIESTIPRERLRAIQTPQIFNFKELLSYHRSNKEFTDDSSLMVEHKKRVVVTRGEKINFKLTTKEDINMAKLLLDEPKYRVGTGYDIHRFIKAQGKAKSFIKICGVEIEYDMKIEAHSDGDVAIHAVVDAILGALGCGDIGAHFPPSFPEWKDRNSSHFLDFAAKKAKEKGYSVSNLDITIVCEEPKISPYKVAMKKFISKTLEIDSEFVNVKATTTEKLGSIGRNEGILAHASVLLYKIAPLHN</sequence>
<feature type="chain" id="PRO_0000075683" description="Bifunctional enzyme IspD/IspF">
    <location>
        <begin position="1"/>
        <end position="405"/>
    </location>
</feature>
<feature type="region of interest" description="2-C-methyl-D-erythritol 4-phosphate cytidylyltransferase" evidence="1">
    <location>
        <begin position="1"/>
        <end position="240"/>
    </location>
</feature>
<feature type="region of interest" description="2-C-methyl-D-erythritol 2,4-cyclodiphosphate synthase" evidence="1">
    <location>
        <begin position="240"/>
        <end position="405"/>
    </location>
</feature>
<feature type="binding site" evidence="1">
    <location>
        <begin position="246"/>
        <end position="248"/>
    </location>
    <ligand>
        <name>4-CDP-2-C-methyl-D-erythritol 2-phosphate</name>
        <dbReference type="ChEBI" id="CHEBI:57919"/>
    </ligand>
</feature>
<feature type="binding site" evidence="1">
    <location>
        <position position="246"/>
    </location>
    <ligand>
        <name>a divalent metal cation</name>
        <dbReference type="ChEBI" id="CHEBI:60240"/>
    </ligand>
</feature>
<feature type="binding site" evidence="1">
    <location>
        <position position="248"/>
    </location>
    <ligand>
        <name>a divalent metal cation</name>
        <dbReference type="ChEBI" id="CHEBI:60240"/>
    </ligand>
</feature>
<feature type="binding site" evidence="1">
    <location>
        <begin position="277"/>
        <end position="278"/>
    </location>
    <ligand>
        <name>4-CDP-2-C-methyl-D-erythritol 2-phosphate</name>
        <dbReference type="ChEBI" id="CHEBI:57919"/>
    </ligand>
</feature>
<feature type="binding site" evidence="1">
    <location>
        <position position="285"/>
    </location>
    <ligand>
        <name>a divalent metal cation</name>
        <dbReference type="ChEBI" id="CHEBI:60240"/>
    </ligand>
</feature>
<feature type="binding site" evidence="1">
    <location>
        <begin position="299"/>
        <end position="301"/>
    </location>
    <ligand>
        <name>4-CDP-2-C-methyl-D-erythritol 2-phosphate</name>
        <dbReference type="ChEBI" id="CHEBI:57919"/>
    </ligand>
</feature>
<feature type="binding site" evidence="1">
    <location>
        <begin position="375"/>
        <end position="378"/>
    </location>
    <ligand>
        <name>4-CDP-2-C-methyl-D-erythritol 2-phosphate</name>
        <dbReference type="ChEBI" id="CHEBI:57919"/>
    </ligand>
</feature>
<feature type="binding site" evidence="1">
    <location>
        <position position="385"/>
    </location>
    <ligand>
        <name>4-CDP-2-C-methyl-D-erythritol 2-phosphate</name>
        <dbReference type="ChEBI" id="CHEBI:57919"/>
    </ligand>
</feature>
<feature type="site" description="Positions MEP for the nucleophilic attack" evidence="1">
    <location>
        <position position="168"/>
    </location>
</feature>
<feature type="site" description="Positions MEP for the nucleophilic attack" evidence="1">
    <location>
        <position position="220"/>
    </location>
</feature>
<feature type="site" description="Transition state stabilizer" evidence="1">
    <location>
        <position position="277"/>
    </location>
</feature>
<feature type="site" description="Transition state stabilizer" evidence="1">
    <location>
        <position position="376"/>
    </location>
</feature>
<proteinExistence type="inferred from homology"/>
<keyword id="KW-0414">Isoprene biosynthesis</keyword>
<keyword id="KW-0456">Lyase</keyword>
<keyword id="KW-0479">Metal-binding</keyword>
<keyword id="KW-0511">Multifunctional enzyme</keyword>
<keyword id="KW-0548">Nucleotidyltransferase</keyword>
<keyword id="KW-1185">Reference proteome</keyword>
<keyword id="KW-0808">Transferase</keyword>
<name>ISPDF_WOLTR</name>
<evidence type="ECO:0000255" key="1">
    <source>
        <dbReference type="HAMAP-Rule" id="MF_01520"/>
    </source>
</evidence>
<accession>Q5GSM7</accession>